<sequence>MGRRRVKRRINIPKRQSRLEKRFNCPVCNHENVVQCTVKKTLMKGFANCSVCEASFACDANKLTTGIDVYSAWVDECCKR</sequence>
<comment type="function">
    <text evidence="1">Transcription elongation factor implicated in the maintenance of proper chromatin structure in actively transcribed regions.</text>
</comment>
<comment type="subcellular location">
    <subcellularLocation>
        <location evidence="1">Nucleus</location>
    </subcellularLocation>
</comment>
<comment type="similarity">
    <text evidence="3">Belongs to the ELOF1 family.</text>
</comment>
<name>ELOF1_ENCCU</name>
<feature type="chain" id="PRO_0000120948" description="Transcription elongation factor 1 homolog">
    <location>
        <begin position="1"/>
        <end position="80"/>
    </location>
</feature>
<feature type="binding site" evidence="2">
    <location>
        <position position="25"/>
    </location>
    <ligand>
        <name>Zn(2+)</name>
        <dbReference type="ChEBI" id="CHEBI:29105"/>
    </ligand>
</feature>
<feature type="binding site" evidence="2">
    <location>
        <position position="28"/>
    </location>
    <ligand>
        <name>Zn(2+)</name>
        <dbReference type="ChEBI" id="CHEBI:29105"/>
    </ligand>
</feature>
<feature type="binding site" evidence="2">
    <location>
        <position position="49"/>
    </location>
    <ligand>
        <name>Zn(2+)</name>
        <dbReference type="ChEBI" id="CHEBI:29105"/>
    </ligand>
</feature>
<feature type="binding site" evidence="2">
    <location>
        <position position="52"/>
    </location>
    <ligand>
        <name>Zn(2+)</name>
        <dbReference type="ChEBI" id="CHEBI:29105"/>
    </ligand>
</feature>
<accession>Q8STS7</accession>
<proteinExistence type="inferred from homology"/>
<gene>
    <name type="ordered locus">ECU09_0850</name>
</gene>
<keyword id="KW-0479">Metal-binding</keyword>
<keyword id="KW-0539">Nucleus</keyword>
<keyword id="KW-1185">Reference proteome</keyword>
<keyword id="KW-0804">Transcription</keyword>
<keyword id="KW-0805">Transcription regulation</keyword>
<keyword id="KW-0862">Zinc</keyword>
<keyword id="KW-0863">Zinc-finger</keyword>
<organism>
    <name type="scientific">Encephalitozoon cuniculi (strain GB-M1)</name>
    <name type="common">Microsporidian parasite</name>
    <dbReference type="NCBI Taxonomy" id="284813"/>
    <lineage>
        <taxon>Eukaryota</taxon>
        <taxon>Fungi</taxon>
        <taxon>Fungi incertae sedis</taxon>
        <taxon>Microsporidia</taxon>
        <taxon>Unikaryonidae</taxon>
        <taxon>Encephalitozoon</taxon>
    </lineage>
</organism>
<dbReference type="EMBL" id="AL590451">
    <property type="protein sequence ID" value="CAD27058.2"/>
    <property type="molecule type" value="Genomic_DNA"/>
</dbReference>
<dbReference type="RefSeq" id="NP_001402339.1">
    <property type="nucleotide sequence ID" value="NM_001415392.1"/>
</dbReference>
<dbReference type="RefSeq" id="XP_955639.1">
    <property type="nucleotide sequence ID" value="XM_950546.1"/>
</dbReference>
<dbReference type="SMR" id="Q8STS7"/>
<dbReference type="FunCoup" id="Q8STS7">
    <property type="interactions" value="89"/>
</dbReference>
<dbReference type="STRING" id="284813.Q8STS7"/>
<dbReference type="GeneID" id="860424"/>
<dbReference type="VEuPathDB" id="MicrosporidiaDB:ECU09_0850"/>
<dbReference type="HOGENOM" id="CLU_105983_2_0_1"/>
<dbReference type="InParanoid" id="Q8STS7"/>
<dbReference type="OrthoDB" id="445983at2759"/>
<dbReference type="Proteomes" id="UP000000819">
    <property type="component" value="Chromosome IX"/>
</dbReference>
<dbReference type="GO" id="GO:0008023">
    <property type="term" value="C:transcription elongation factor complex"/>
    <property type="evidence" value="ECO:0007669"/>
    <property type="project" value="TreeGrafter"/>
</dbReference>
<dbReference type="GO" id="GO:0000993">
    <property type="term" value="F:RNA polymerase II complex binding"/>
    <property type="evidence" value="ECO:0007669"/>
    <property type="project" value="TreeGrafter"/>
</dbReference>
<dbReference type="GO" id="GO:0008270">
    <property type="term" value="F:zinc ion binding"/>
    <property type="evidence" value="ECO:0007669"/>
    <property type="project" value="UniProtKB-KW"/>
</dbReference>
<dbReference type="GO" id="GO:0006368">
    <property type="term" value="P:transcription elongation by RNA polymerase II"/>
    <property type="evidence" value="ECO:0007669"/>
    <property type="project" value="TreeGrafter"/>
</dbReference>
<dbReference type="FunFam" id="2.20.25.190:FF:000001">
    <property type="entry name" value="Transcription elongation factor 1 homolog"/>
    <property type="match status" value="1"/>
</dbReference>
<dbReference type="Gene3D" id="2.20.25.190">
    <property type="match status" value="1"/>
</dbReference>
<dbReference type="InterPro" id="IPR007808">
    <property type="entry name" value="Elf1"/>
</dbReference>
<dbReference type="InterPro" id="IPR038567">
    <property type="entry name" value="T_Elf1_sf"/>
</dbReference>
<dbReference type="PANTHER" id="PTHR20934">
    <property type="entry name" value="TRANSCRIPTION ELONGATION FACTOR 1 HOMOLOG"/>
    <property type="match status" value="1"/>
</dbReference>
<dbReference type="PANTHER" id="PTHR20934:SF0">
    <property type="entry name" value="TRANSCRIPTION ELONGATION FACTOR 1 HOMOLOG"/>
    <property type="match status" value="1"/>
</dbReference>
<dbReference type="Pfam" id="PF05129">
    <property type="entry name" value="Zn_ribbon_Elf1"/>
    <property type="match status" value="1"/>
</dbReference>
<dbReference type="SUPFAM" id="SSF57783">
    <property type="entry name" value="Zinc beta-ribbon"/>
    <property type="match status" value="1"/>
</dbReference>
<protein>
    <recommendedName>
        <fullName>Transcription elongation factor 1 homolog</fullName>
    </recommendedName>
</protein>
<evidence type="ECO:0000250" key="1"/>
<evidence type="ECO:0000250" key="2">
    <source>
        <dbReference type="UniProtKB" id="P60003"/>
    </source>
</evidence>
<evidence type="ECO:0000305" key="3"/>
<reference key="1">
    <citation type="journal article" date="2001" name="Nature">
        <title>Genome sequence and gene compaction of the eukaryote parasite Encephalitozoon cuniculi.</title>
        <authorList>
            <person name="Katinka M.D."/>
            <person name="Duprat S."/>
            <person name="Cornillot E."/>
            <person name="Metenier G."/>
            <person name="Thomarat F."/>
            <person name="Prensier G."/>
            <person name="Barbe V."/>
            <person name="Peyretaillade E."/>
            <person name="Brottier P."/>
            <person name="Wincker P."/>
            <person name="Delbac F."/>
            <person name="El Alaoui H."/>
            <person name="Peyret P."/>
            <person name="Saurin W."/>
            <person name="Gouy M."/>
            <person name="Weissenbach J."/>
            <person name="Vivares C.P."/>
        </authorList>
    </citation>
    <scope>NUCLEOTIDE SEQUENCE [LARGE SCALE GENOMIC DNA]</scope>
    <source>
        <strain>GB-M1</strain>
    </source>
</reference>
<reference key="2">
    <citation type="journal article" date="2009" name="BMC Genomics">
        <title>Identification of transcriptional signals in Encephalitozoon cuniculi widespread among Microsporidia phylum: support for accurate structural genome annotation.</title>
        <authorList>
            <person name="Peyretaillade E."/>
            <person name="Goncalves O."/>
            <person name="Terrat S."/>
            <person name="Dugat-Bony E."/>
            <person name="Wincker P."/>
            <person name="Cornman R.S."/>
            <person name="Evans J.D."/>
            <person name="Delbac F."/>
            <person name="Peyret P."/>
        </authorList>
    </citation>
    <scope>GENOME REANNOTATION</scope>
    <source>
        <strain>GB-M1</strain>
    </source>
</reference>